<protein>
    <recommendedName>
        <fullName evidence="2">Pseudin-4</fullName>
    </recommendedName>
</protein>
<feature type="peptide" id="PRO_0000043831" description="Pseudin-4" evidence="1">
    <location>
        <begin position="1"/>
        <end position="23"/>
    </location>
</feature>
<reference key="1">
    <citation type="journal article" date="2001" name="Biochem. Biophys. Res. Commun.">
        <title>Pseudin-2: an antimicrobial peptide with low hemolytic activity from the skin of the paradoxical frog.</title>
        <authorList>
            <person name="Olson L. III"/>
            <person name="Soto A.M."/>
            <person name="Knoop F.C."/>
            <person name="Conlon J.M."/>
        </authorList>
    </citation>
    <scope>PROTEIN SEQUENCE</scope>
    <scope>FUNCTION</scope>
    <scope>MASS SPECTROMETRY</scope>
    <scope>SUBCELLULAR LOCATION</scope>
    <source>
        <tissue>Skin</tissue>
    </source>
</reference>
<organism>
    <name type="scientific">Pseudis paradoxa</name>
    <name type="common">Paradoxical frog</name>
    <dbReference type="NCBI Taxonomy" id="43558"/>
    <lineage>
        <taxon>Eukaryota</taxon>
        <taxon>Metazoa</taxon>
        <taxon>Chordata</taxon>
        <taxon>Craniata</taxon>
        <taxon>Vertebrata</taxon>
        <taxon>Euteleostomi</taxon>
        <taxon>Amphibia</taxon>
        <taxon>Batrachia</taxon>
        <taxon>Anura</taxon>
        <taxon>Neobatrachia</taxon>
        <taxon>Hyloidea</taxon>
        <taxon>Hylidae</taxon>
        <taxon>Hylinae</taxon>
        <taxon>Dendropsophini</taxon>
        <taxon>Pseudis</taxon>
    </lineage>
</organism>
<dbReference type="GO" id="GO:0005576">
    <property type="term" value="C:extracellular region"/>
    <property type="evidence" value="ECO:0007669"/>
    <property type="project" value="UniProtKB-SubCell"/>
</dbReference>
<dbReference type="GO" id="GO:0042742">
    <property type="term" value="P:defense response to bacterium"/>
    <property type="evidence" value="ECO:0007669"/>
    <property type="project" value="UniProtKB-KW"/>
</dbReference>
<dbReference type="GO" id="GO:0050832">
    <property type="term" value="P:defense response to fungus"/>
    <property type="evidence" value="ECO:0000314"/>
    <property type="project" value="UniProtKB"/>
</dbReference>
<dbReference type="GO" id="GO:0045087">
    <property type="term" value="P:innate immune response"/>
    <property type="evidence" value="ECO:0007669"/>
    <property type="project" value="UniProtKB-KW"/>
</dbReference>
<dbReference type="GO" id="GO:0031640">
    <property type="term" value="P:killing of cells of another organism"/>
    <property type="evidence" value="ECO:0007669"/>
    <property type="project" value="UniProtKB-KW"/>
</dbReference>
<dbReference type="GO" id="GO:0006805">
    <property type="term" value="P:xenobiotic metabolic process"/>
    <property type="evidence" value="ECO:0000314"/>
    <property type="project" value="UniProtKB"/>
</dbReference>
<dbReference type="InterPro" id="IPR013156">
    <property type="entry name" value="Antimicrobial_19"/>
</dbReference>
<dbReference type="Pfam" id="PF08225">
    <property type="entry name" value="Antimicrobial19"/>
    <property type="match status" value="1"/>
</dbReference>
<sequence>GINTLKKVIQGLHEVIKLVSNHA</sequence>
<keyword id="KW-0878">Amphibian defense peptide</keyword>
<keyword id="KW-0044">Antibiotic</keyword>
<keyword id="KW-0929">Antimicrobial</keyword>
<keyword id="KW-0903">Direct protein sequencing</keyword>
<keyword id="KW-0295">Fungicide</keyword>
<keyword id="KW-0391">Immunity</keyword>
<keyword id="KW-0399">Innate immunity</keyword>
<keyword id="KW-0964">Secreted</keyword>
<name>PS4_PSEPD</name>
<evidence type="ECO:0000269" key="1">
    <source>
    </source>
</evidence>
<evidence type="ECO:0000303" key="2">
    <source>
    </source>
</evidence>
<evidence type="ECO:0000305" key="3"/>
<evidence type="ECO:0000305" key="4">
    <source>
    </source>
</evidence>
<proteinExistence type="evidence at protein level"/>
<accession>P83191</accession>
<comment type="function">
    <text evidence="1">Possesses antifungal activity against C.albicans and is also active against E.coli and S.aureus.</text>
</comment>
<comment type="subcellular location">
    <subcellularLocation>
        <location evidence="1">Secreted</location>
    </subcellularLocation>
</comment>
<comment type="tissue specificity">
    <text evidence="4">Expressed by the skin glands.</text>
</comment>
<comment type="mass spectrometry"/>
<comment type="similarity">
    <text evidence="3">Belongs to the frog skin active peptide (FSAP) family. Pseudin subfamily.</text>
</comment>
<comment type="online information" name="The antimicrobial peptide database">
    <link uri="https://wangapd3.com/database/query_output.php?ID=00478"/>
</comment>